<proteinExistence type="inferred from homology"/>
<accession>Q8FNG6</accession>
<keyword id="KW-0030">Aminoacyl-tRNA synthetase</keyword>
<keyword id="KW-0067">ATP-binding</keyword>
<keyword id="KW-0963">Cytoplasm</keyword>
<keyword id="KW-0436">Ligase</keyword>
<keyword id="KW-0547">Nucleotide-binding</keyword>
<keyword id="KW-0648">Protein biosynthesis</keyword>
<keyword id="KW-1185">Reference proteome</keyword>
<protein>
    <recommendedName>
        <fullName evidence="1">Glycine--tRNA ligase</fullName>
        <ecNumber evidence="1">6.1.1.14</ecNumber>
    </recommendedName>
    <alternativeName>
        <fullName evidence="1">Glycyl-tRNA synthetase</fullName>
        <shortName evidence="1">GlyRS</shortName>
    </alternativeName>
</protein>
<sequence>MAQQSIIDTVVNLCKRRGLVYPCGEIYGGTRSAWDYGPLGVELKENIKRQWWRTMVTSRPDVVGVDTSVILPRQVWVTSGHVEVFTDPLVESLHTHKRYRADHLLEAYEEKHGHPPANGLADINDPETGQPGKWTEPKAFSGLLKTFLGPVDDEEGLHYLRPETAQGIFVNFKNVMNSSRMKPPFGIANIGKSFRNEITPGNFIFRTREFEQMEMEFFVKPGEDEEWHQHWIDARHQWYIDLGVNPDNLRLYEHPQEKLSHYSKRTVDIEYAFNFANSKWGELEGIANRTDYDLRVHSEGSGEDLSYFDQETGERWIPYVIEPAAGLGRAMMVFLMDAYHEDEAPNSKGGVDKRVVLKLDRRLAPVKVAVLPLSKKPELSGPAEKLAAELRQFWNVEYDTSGAIGRRYRRQDEIGTPFCVTVDFDTLEDNAVTVRERDTMEQIRVPLDELQGYLAQQLIGC</sequence>
<evidence type="ECO:0000255" key="1">
    <source>
        <dbReference type="HAMAP-Rule" id="MF_00253"/>
    </source>
</evidence>
<evidence type="ECO:0000305" key="2"/>
<feature type="chain" id="PRO_0000072955" description="Glycine--tRNA ligase">
    <location>
        <begin position="1"/>
        <end position="461"/>
    </location>
</feature>
<feature type="binding site" evidence="1">
    <location>
        <position position="100"/>
    </location>
    <ligand>
        <name>substrate</name>
    </ligand>
</feature>
<feature type="binding site" evidence="1">
    <location>
        <position position="163"/>
    </location>
    <ligand>
        <name>substrate</name>
    </ligand>
</feature>
<feature type="binding site" evidence="1">
    <location>
        <begin position="195"/>
        <end position="197"/>
    </location>
    <ligand>
        <name>ATP</name>
        <dbReference type="ChEBI" id="CHEBI:30616"/>
    </ligand>
</feature>
<feature type="binding site" evidence="1">
    <location>
        <begin position="205"/>
        <end position="210"/>
    </location>
    <ligand>
        <name>ATP</name>
        <dbReference type="ChEBI" id="CHEBI:30616"/>
    </ligand>
</feature>
<feature type="binding site" evidence="1">
    <location>
        <begin position="210"/>
        <end position="214"/>
    </location>
    <ligand>
        <name>substrate</name>
    </ligand>
</feature>
<feature type="binding site" evidence="1">
    <location>
        <begin position="282"/>
        <end position="283"/>
    </location>
    <ligand>
        <name>ATP</name>
        <dbReference type="ChEBI" id="CHEBI:30616"/>
    </ligand>
</feature>
<feature type="binding site" evidence="1">
    <location>
        <begin position="322"/>
        <end position="326"/>
    </location>
    <ligand>
        <name>substrate</name>
    </ligand>
</feature>
<feature type="binding site" evidence="1">
    <location>
        <begin position="326"/>
        <end position="329"/>
    </location>
    <ligand>
        <name>ATP</name>
        <dbReference type="ChEBI" id="CHEBI:30616"/>
    </ligand>
</feature>
<comment type="function">
    <text evidence="1">Catalyzes the attachment of glycine to tRNA(Gly).</text>
</comment>
<comment type="catalytic activity">
    <reaction evidence="1">
        <text>tRNA(Gly) + glycine + ATP = glycyl-tRNA(Gly) + AMP + diphosphate</text>
        <dbReference type="Rhea" id="RHEA:16013"/>
        <dbReference type="Rhea" id="RHEA-COMP:9664"/>
        <dbReference type="Rhea" id="RHEA-COMP:9683"/>
        <dbReference type="ChEBI" id="CHEBI:30616"/>
        <dbReference type="ChEBI" id="CHEBI:33019"/>
        <dbReference type="ChEBI" id="CHEBI:57305"/>
        <dbReference type="ChEBI" id="CHEBI:78442"/>
        <dbReference type="ChEBI" id="CHEBI:78522"/>
        <dbReference type="ChEBI" id="CHEBI:456215"/>
        <dbReference type="EC" id="6.1.1.14"/>
    </reaction>
</comment>
<comment type="subunit">
    <text evidence="1">Homodimer.</text>
</comment>
<comment type="subcellular location">
    <subcellularLocation>
        <location evidence="1">Cytoplasm</location>
    </subcellularLocation>
</comment>
<comment type="similarity">
    <text evidence="1">Belongs to the class-II aminoacyl-tRNA synthetase family.</text>
</comment>
<comment type="sequence caution" evidence="2">
    <conflict type="erroneous initiation">
        <sequence resource="EMBL-CDS" id="BAC18988"/>
    </conflict>
</comment>
<dbReference type="EC" id="6.1.1.14" evidence="1"/>
<dbReference type="EMBL" id="BA000035">
    <property type="protein sequence ID" value="BAC18988.1"/>
    <property type="status" value="ALT_INIT"/>
    <property type="molecule type" value="Genomic_DNA"/>
</dbReference>
<dbReference type="RefSeq" id="WP_006768181.1">
    <property type="nucleotide sequence ID" value="NC_004369.1"/>
</dbReference>
<dbReference type="SMR" id="Q8FNG6"/>
<dbReference type="STRING" id="196164.gene:10742609"/>
<dbReference type="KEGG" id="cef:CE2178"/>
<dbReference type="eggNOG" id="COG0423">
    <property type="taxonomic scope" value="Bacteria"/>
</dbReference>
<dbReference type="HOGENOM" id="CLU_015515_2_1_11"/>
<dbReference type="OrthoDB" id="9760853at2"/>
<dbReference type="Proteomes" id="UP000001409">
    <property type="component" value="Chromosome"/>
</dbReference>
<dbReference type="GO" id="GO:0005737">
    <property type="term" value="C:cytoplasm"/>
    <property type="evidence" value="ECO:0007669"/>
    <property type="project" value="UniProtKB-SubCell"/>
</dbReference>
<dbReference type="GO" id="GO:0005524">
    <property type="term" value="F:ATP binding"/>
    <property type="evidence" value="ECO:0007669"/>
    <property type="project" value="UniProtKB-UniRule"/>
</dbReference>
<dbReference type="GO" id="GO:0004820">
    <property type="term" value="F:glycine-tRNA ligase activity"/>
    <property type="evidence" value="ECO:0000250"/>
    <property type="project" value="UniProtKB"/>
</dbReference>
<dbReference type="GO" id="GO:0046983">
    <property type="term" value="F:protein dimerization activity"/>
    <property type="evidence" value="ECO:0000250"/>
    <property type="project" value="UniProtKB"/>
</dbReference>
<dbReference type="GO" id="GO:0006426">
    <property type="term" value="P:glycyl-tRNA aminoacylation"/>
    <property type="evidence" value="ECO:0007669"/>
    <property type="project" value="UniProtKB-UniRule"/>
</dbReference>
<dbReference type="CDD" id="cd00774">
    <property type="entry name" value="GlyRS-like_core"/>
    <property type="match status" value="1"/>
</dbReference>
<dbReference type="CDD" id="cd00858">
    <property type="entry name" value="GlyRS_anticodon"/>
    <property type="match status" value="1"/>
</dbReference>
<dbReference type="FunFam" id="3.40.50.800:FF:000002">
    <property type="entry name" value="Glycine--tRNA ligase"/>
    <property type="match status" value="1"/>
</dbReference>
<dbReference type="Gene3D" id="3.40.50.800">
    <property type="entry name" value="Anticodon-binding domain"/>
    <property type="match status" value="1"/>
</dbReference>
<dbReference type="Gene3D" id="3.30.930.10">
    <property type="entry name" value="Bira Bifunctional Protein, Domain 2"/>
    <property type="match status" value="1"/>
</dbReference>
<dbReference type="HAMAP" id="MF_00253_B">
    <property type="entry name" value="Gly_tRNA_synth_B"/>
    <property type="match status" value="1"/>
</dbReference>
<dbReference type="InterPro" id="IPR002314">
    <property type="entry name" value="aa-tRNA-synt_IIb"/>
</dbReference>
<dbReference type="InterPro" id="IPR006195">
    <property type="entry name" value="aa-tRNA-synth_II"/>
</dbReference>
<dbReference type="InterPro" id="IPR045864">
    <property type="entry name" value="aa-tRNA-synth_II/BPL/LPL"/>
</dbReference>
<dbReference type="InterPro" id="IPR004154">
    <property type="entry name" value="Anticodon-bd"/>
</dbReference>
<dbReference type="InterPro" id="IPR036621">
    <property type="entry name" value="Anticodon-bd_dom_sf"/>
</dbReference>
<dbReference type="InterPro" id="IPR027031">
    <property type="entry name" value="Gly-tRNA_synthase/POLG2"/>
</dbReference>
<dbReference type="InterPro" id="IPR022961">
    <property type="entry name" value="Gly_tRNA_ligase_bac"/>
</dbReference>
<dbReference type="InterPro" id="IPR033731">
    <property type="entry name" value="GlyRS-like_core"/>
</dbReference>
<dbReference type="InterPro" id="IPR002315">
    <property type="entry name" value="tRNA-synt_gly"/>
</dbReference>
<dbReference type="NCBIfam" id="TIGR00389">
    <property type="entry name" value="glyS_dimeric"/>
    <property type="match status" value="1"/>
</dbReference>
<dbReference type="NCBIfam" id="NF003211">
    <property type="entry name" value="PRK04173.1"/>
    <property type="match status" value="1"/>
</dbReference>
<dbReference type="PANTHER" id="PTHR10745:SF8">
    <property type="entry name" value="DNA POLYMERASE SUBUNIT GAMMA-2, MITOCHONDRIAL"/>
    <property type="match status" value="1"/>
</dbReference>
<dbReference type="PANTHER" id="PTHR10745">
    <property type="entry name" value="GLYCYL-TRNA SYNTHETASE/DNA POLYMERASE SUBUNIT GAMMA-2"/>
    <property type="match status" value="1"/>
</dbReference>
<dbReference type="Pfam" id="PF03129">
    <property type="entry name" value="HGTP_anticodon"/>
    <property type="match status" value="1"/>
</dbReference>
<dbReference type="Pfam" id="PF00587">
    <property type="entry name" value="tRNA-synt_2b"/>
    <property type="match status" value="1"/>
</dbReference>
<dbReference type="PRINTS" id="PR01043">
    <property type="entry name" value="TRNASYNTHGLY"/>
</dbReference>
<dbReference type="SUPFAM" id="SSF52954">
    <property type="entry name" value="Class II aaRS ABD-related"/>
    <property type="match status" value="1"/>
</dbReference>
<dbReference type="SUPFAM" id="SSF55681">
    <property type="entry name" value="Class II aaRS and biotin synthetases"/>
    <property type="match status" value="1"/>
</dbReference>
<dbReference type="PROSITE" id="PS50862">
    <property type="entry name" value="AA_TRNA_LIGASE_II"/>
    <property type="match status" value="1"/>
</dbReference>
<gene>
    <name evidence="1" type="primary">glyQS</name>
    <name type="ordered locus">CE2178</name>
</gene>
<organism>
    <name type="scientific">Corynebacterium efficiens (strain DSM 44549 / YS-314 / AJ 12310 / JCM 11189 / NBRC 100395)</name>
    <dbReference type="NCBI Taxonomy" id="196164"/>
    <lineage>
        <taxon>Bacteria</taxon>
        <taxon>Bacillati</taxon>
        <taxon>Actinomycetota</taxon>
        <taxon>Actinomycetes</taxon>
        <taxon>Mycobacteriales</taxon>
        <taxon>Corynebacteriaceae</taxon>
        <taxon>Corynebacterium</taxon>
    </lineage>
</organism>
<name>SYG_COREF</name>
<reference key="1">
    <citation type="journal article" date="2003" name="Genome Res.">
        <title>Comparative complete genome sequence analysis of the amino acid replacements responsible for the thermostability of Corynebacterium efficiens.</title>
        <authorList>
            <person name="Nishio Y."/>
            <person name="Nakamura Y."/>
            <person name="Kawarabayasi Y."/>
            <person name="Usuda Y."/>
            <person name="Kimura E."/>
            <person name="Sugimoto S."/>
            <person name="Matsui K."/>
            <person name="Yamagishi A."/>
            <person name="Kikuchi H."/>
            <person name="Ikeo K."/>
            <person name="Gojobori T."/>
        </authorList>
    </citation>
    <scope>NUCLEOTIDE SEQUENCE [LARGE SCALE GENOMIC DNA]</scope>
    <source>
        <strain>DSM 44549 / YS-314 / AJ 12310 / JCM 11189 / NBRC 100395</strain>
    </source>
</reference>